<sequence>MFVQEEKIFAGKVLRLQVCTMEGAEWLEEVPEDTTVEKLKERCLKHCVPGSLEDPKTVTHHKLIHATSEKVLTDSKTVLEENIQDRDVLLLIKKRAPPPLPKMADVSAEEKRKQEQKAPDKDAILKATANLPSRNVDRTVAQHNMRDFQTELRKILVSLIEVAQKLLALNPDAVELFKKANAMLDEDEEDRVDEIALRQLTEMGFPESRAVKALRLNHMSVTQAMEWLIEHADDPAVDAPLPGQTPSEAAAEAGASSAEATAGPSSEAGGEEAKDELTEIFKKIRRKREFRPDPRAVIALMEMGFDEKEVVDALRVNNNQQNAACEWLLGDRKPSPEDLDKGIDTNSPLFQAILENPVVQLGLTNPKTLLAFEDMLENPLNSTQWMNDPETGPVMLQISRIFQTLNRT</sequence>
<proteinExistence type="evidence at transcript level"/>
<protein>
    <recommendedName>
        <fullName>Ubiquitin-associated domain-containing protein 1</fullName>
        <shortName>UBA domain-containing protein 1</shortName>
    </recommendedName>
    <alternativeName>
        <fullName>E3 ubiquitin-protein ligase subunit KPC2</fullName>
    </alternativeName>
    <alternativeName>
        <fullName>Kip1 ubiquitination-promoting complex protein 2</fullName>
    </alternativeName>
</protein>
<reference key="1">
    <citation type="journal article" date="2005" name="Genome Biol.">
        <title>Full-length cDNAs from chicken bursal lymphocytes to facilitate gene function analysis.</title>
        <authorList>
            <person name="Caldwell R.B."/>
            <person name="Kierzek A.M."/>
            <person name="Arakawa H."/>
            <person name="Bezzubov Y."/>
            <person name="Zaim J."/>
            <person name="Fiedler P."/>
            <person name="Kutter S."/>
            <person name="Blagodatski A."/>
            <person name="Kostovska D."/>
            <person name="Koter M."/>
            <person name="Plachy J."/>
            <person name="Carninci P."/>
            <person name="Hayashizaki Y."/>
            <person name="Buerstedde J.-M."/>
        </authorList>
    </citation>
    <scope>NUCLEOTIDE SEQUENCE [LARGE SCALE MRNA]</scope>
    <source>
        <strain>CB</strain>
        <tissue>Bursa of Fabricius</tissue>
    </source>
</reference>
<organism>
    <name type="scientific">Gallus gallus</name>
    <name type="common">Chicken</name>
    <dbReference type="NCBI Taxonomy" id="9031"/>
    <lineage>
        <taxon>Eukaryota</taxon>
        <taxon>Metazoa</taxon>
        <taxon>Chordata</taxon>
        <taxon>Craniata</taxon>
        <taxon>Vertebrata</taxon>
        <taxon>Euteleostomi</taxon>
        <taxon>Archelosauria</taxon>
        <taxon>Archosauria</taxon>
        <taxon>Dinosauria</taxon>
        <taxon>Saurischia</taxon>
        <taxon>Theropoda</taxon>
        <taxon>Coelurosauria</taxon>
        <taxon>Aves</taxon>
        <taxon>Neognathae</taxon>
        <taxon>Galloanserae</taxon>
        <taxon>Galliformes</taxon>
        <taxon>Phasianidae</taxon>
        <taxon>Phasianinae</taxon>
        <taxon>Gallus</taxon>
    </lineage>
</organism>
<dbReference type="EMBL" id="AJ720445">
    <property type="protein sequence ID" value="CAG32104.1"/>
    <property type="molecule type" value="mRNA"/>
</dbReference>
<dbReference type="RefSeq" id="NP_001026645.1">
    <property type="nucleotide sequence ID" value="NM_001031474.2"/>
</dbReference>
<dbReference type="SMR" id="Q5ZJI9"/>
<dbReference type="FunCoup" id="Q5ZJI9">
    <property type="interactions" value="740"/>
</dbReference>
<dbReference type="STRING" id="9031.ENSGALP00000045014"/>
<dbReference type="PaxDb" id="9031-ENSGALP00000002626"/>
<dbReference type="GeneID" id="427754"/>
<dbReference type="KEGG" id="gga:427754"/>
<dbReference type="CTD" id="10422"/>
<dbReference type="VEuPathDB" id="HostDB:geneid_427754"/>
<dbReference type="eggNOG" id="ENOG502QQQ6">
    <property type="taxonomic scope" value="Eukaryota"/>
</dbReference>
<dbReference type="InParanoid" id="Q5ZJI9"/>
<dbReference type="OrthoDB" id="336240at2759"/>
<dbReference type="PhylomeDB" id="Q5ZJI9"/>
<dbReference type="UniPathway" id="UPA00143"/>
<dbReference type="PRO" id="PR:Q5ZJI9"/>
<dbReference type="Proteomes" id="UP000000539">
    <property type="component" value="Unassembled WGS sequence"/>
</dbReference>
<dbReference type="GO" id="GO:0005737">
    <property type="term" value="C:cytoplasm"/>
    <property type="evidence" value="ECO:0007669"/>
    <property type="project" value="UniProtKB-SubCell"/>
</dbReference>
<dbReference type="GO" id="GO:0000151">
    <property type="term" value="C:ubiquitin ligase complex"/>
    <property type="evidence" value="ECO:0000318"/>
    <property type="project" value="GO_Central"/>
</dbReference>
<dbReference type="GO" id="GO:0031593">
    <property type="term" value="F:polyubiquitin modification-dependent protein binding"/>
    <property type="evidence" value="ECO:0000250"/>
    <property type="project" value="UniProtKB"/>
</dbReference>
<dbReference type="GO" id="GO:0070628">
    <property type="term" value="F:proteasome binding"/>
    <property type="evidence" value="ECO:0000250"/>
    <property type="project" value="UniProtKB"/>
</dbReference>
<dbReference type="GO" id="GO:0051604">
    <property type="term" value="P:protein maturation"/>
    <property type="evidence" value="ECO:0000250"/>
    <property type="project" value="UniProtKB"/>
</dbReference>
<dbReference type="GO" id="GO:0016567">
    <property type="term" value="P:protein ubiquitination"/>
    <property type="evidence" value="ECO:0000250"/>
    <property type="project" value="UniProtKB"/>
</dbReference>
<dbReference type="CDD" id="cd14303">
    <property type="entry name" value="UBA1_KPC2"/>
    <property type="match status" value="1"/>
</dbReference>
<dbReference type="CDD" id="cd14304">
    <property type="entry name" value="UBA2_KPC2"/>
    <property type="match status" value="1"/>
</dbReference>
<dbReference type="CDD" id="cd17066">
    <property type="entry name" value="Ubl_KPC2"/>
    <property type="match status" value="1"/>
</dbReference>
<dbReference type="FunFam" id="1.10.260.100:FF:000006">
    <property type="entry name" value="Ubiquitin-associated domain-containing protein 1"/>
    <property type="match status" value="1"/>
</dbReference>
<dbReference type="Gene3D" id="1.10.260.100">
    <property type="match status" value="1"/>
</dbReference>
<dbReference type="Gene3D" id="1.10.8.10">
    <property type="entry name" value="DNA helicase RuvA subunit, C-terminal domain"/>
    <property type="match status" value="2"/>
</dbReference>
<dbReference type="Gene3D" id="3.10.20.90">
    <property type="entry name" value="Phosphatidylinositol 3-kinase Catalytic Subunit, Chain A, domain 1"/>
    <property type="match status" value="1"/>
</dbReference>
<dbReference type="InterPro" id="IPR006636">
    <property type="entry name" value="STI1_HS-bd"/>
</dbReference>
<dbReference type="InterPro" id="IPR015940">
    <property type="entry name" value="UBA"/>
</dbReference>
<dbReference type="InterPro" id="IPR009060">
    <property type="entry name" value="UBA-like_sf"/>
</dbReference>
<dbReference type="InterPro" id="IPR041926">
    <property type="entry name" value="UBA1_UBAC1"/>
</dbReference>
<dbReference type="InterPro" id="IPR041927">
    <property type="entry name" value="UBA2_UBAC1"/>
</dbReference>
<dbReference type="InterPro" id="IPR052476">
    <property type="entry name" value="UBAC1"/>
</dbReference>
<dbReference type="InterPro" id="IPR000626">
    <property type="entry name" value="Ubiquitin-like_dom"/>
</dbReference>
<dbReference type="InterPro" id="IPR029071">
    <property type="entry name" value="Ubiquitin-like_domsf"/>
</dbReference>
<dbReference type="PANTHER" id="PTHR46738">
    <property type="entry name" value="UBIQUITIN-ASSOCIATED DOMAIN-CONTAINING PROTEIN 1"/>
    <property type="match status" value="1"/>
</dbReference>
<dbReference type="PANTHER" id="PTHR46738:SF1">
    <property type="entry name" value="UBIQUITIN-ASSOCIATED DOMAIN-CONTAINING PROTEIN 1"/>
    <property type="match status" value="1"/>
</dbReference>
<dbReference type="Pfam" id="PF22562">
    <property type="entry name" value="UBA_7"/>
    <property type="match status" value="2"/>
</dbReference>
<dbReference type="Pfam" id="PF23326">
    <property type="entry name" value="UBL_UBAC1"/>
    <property type="match status" value="1"/>
</dbReference>
<dbReference type="SMART" id="SM00727">
    <property type="entry name" value="STI1"/>
    <property type="match status" value="1"/>
</dbReference>
<dbReference type="SMART" id="SM00165">
    <property type="entry name" value="UBA"/>
    <property type="match status" value="2"/>
</dbReference>
<dbReference type="SUPFAM" id="SSF46934">
    <property type="entry name" value="UBA-like"/>
    <property type="match status" value="2"/>
</dbReference>
<dbReference type="SUPFAM" id="SSF54236">
    <property type="entry name" value="Ubiquitin-like"/>
    <property type="match status" value="1"/>
</dbReference>
<dbReference type="PROSITE" id="PS50030">
    <property type="entry name" value="UBA"/>
    <property type="match status" value="2"/>
</dbReference>
<dbReference type="PROSITE" id="PS50053">
    <property type="entry name" value="UBIQUITIN_2"/>
    <property type="match status" value="1"/>
</dbReference>
<gene>
    <name type="primary">UBAC1</name>
    <name type="synonym">KPC2</name>
    <name type="synonym">UBADC1</name>
    <name type="ORF">RCJMB04_17l24</name>
</gene>
<feature type="chain" id="PRO_0000250452" description="Ubiquitin-associated domain-containing protein 1">
    <location>
        <begin position="1"/>
        <end position="408"/>
    </location>
</feature>
<feature type="domain" description="Ubiquitin-like" evidence="3">
    <location>
        <begin position="14"/>
        <end position="98"/>
    </location>
</feature>
<feature type="domain" description="UBA 1" evidence="2">
    <location>
        <begin position="185"/>
        <end position="231"/>
    </location>
</feature>
<feature type="domain" description="UBA 2" evidence="2">
    <location>
        <begin position="291"/>
        <end position="331"/>
    </location>
</feature>
<feature type="domain" description="STI1">
    <location>
        <begin position="356"/>
        <end position="395"/>
    </location>
</feature>
<feature type="region of interest" description="Disordered" evidence="4">
    <location>
        <begin position="100"/>
        <end position="119"/>
    </location>
</feature>
<feature type="region of interest" description="Disordered" evidence="4">
    <location>
        <begin position="235"/>
        <end position="275"/>
    </location>
</feature>
<feature type="compositionally biased region" description="Basic and acidic residues" evidence="4">
    <location>
        <begin position="108"/>
        <end position="119"/>
    </location>
</feature>
<feature type="compositionally biased region" description="Low complexity" evidence="4">
    <location>
        <begin position="245"/>
        <end position="268"/>
    </location>
</feature>
<keyword id="KW-0963">Cytoplasm</keyword>
<keyword id="KW-1185">Reference proteome</keyword>
<keyword id="KW-0677">Repeat</keyword>
<keyword id="KW-0833">Ubl conjugation pathway</keyword>
<evidence type="ECO:0000250" key="1">
    <source>
        <dbReference type="UniProtKB" id="Q9BSL1"/>
    </source>
</evidence>
<evidence type="ECO:0000255" key="2">
    <source>
        <dbReference type="PROSITE-ProRule" id="PRU00212"/>
    </source>
</evidence>
<evidence type="ECO:0000255" key="3">
    <source>
        <dbReference type="PROSITE-ProRule" id="PRU00214"/>
    </source>
</evidence>
<evidence type="ECO:0000256" key="4">
    <source>
        <dbReference type="SAM" id="MobiDB-lite"/>
    </source>
</evidence>
<accession>Q5ZJI9</accession>
<name>UBAC1_CHICK</name>
<comment type="function">
    <text evidence="1">Non-catalytic component of the KPC complex, a E3 ubiquitin-protein ligase complex that mediates polyubiquitination of target proteins, such as CDKN1B and NFKB1. Within the KPC complex, UBAC1 acts as an adapter that promotes the transfer of target proteins that have been polyubiquitinated by RNF123/KPC1 to the 26S proteasome.</text>
</comment>
<comment type="pathway">
    <text evidence="1">Protein modification; protein ubiquitination.</text>
</comment>
<comment type="subunit">
    <text evidence="1">Component of the KPC complex.</text>
</comment>
<comment type="subcellular location">
    <subcellularLocation>
        <location evidence="1">Cytoplasm</location>
    </subcellularLocation>
</comment>
<comment type="domain">
    <text evidence="1">The UBA domains recognize and bind polyubiquitinated proteins.</text>
</comment>